<comment type="function">
    <text evidence="1">The beta subunit is responsible for the synthesis of L-tryptophan from indole and L-serine.</text>
</comment>
<comment type="catalytic activity">
    <reaction evidence="1">
        <text>(1S,2R)-1-C-(indol-3-yl)glycerol 3-phosphate + L-serine = D-glyceraldehyde 3-phosphate + L-tryptophan + H2O</text>
        <dbReference type="Rhea" id="RHEA:10532"/>
        <dbReference type="ChEBI" id="CHEBI:15377"/>
        <dbReference type="ChEBI" id="CHEBI:33384"/>
        <dbReference type="ChEBI" id="CHEBI:57912"/>
        <dbReference type="ChEBI" id="CHEBI:58866"/>
        <dbReference type="ChEBI" id="CHEBI:59776"/>
        <dbReference type="EC" id="4.2.1.20"/>
    </reaction>
</comment>
<comment type="cofactor">
    <cofactor evidence="1">
        <name>pyridoxal 5'-phosphate</name>
        <dbReference type="ChEBI" id="CHEBI:597326"/>
    </cofactor>
</comment>
<comment type="pathway">
    <text evidence="1">Amino-acid biosynthesis; L-tryptophan biosynthesis; L-tryptophan from chorismate: step 5/5.</text>
</comment>
<comment type="subunit">
    <text evidence="1">Tetramer of two alpha and two beta chains.</text>
</comment>
<comment type="similarity">
    <text evidence="1">Belongs to the TrpB family.</text>
</comment>
<protein>
    <recommendedName>
        <fullName evidence="1">Tryptophan synthase beta chain</fullName>
        <ecNumber evidence="1">4.2.1.20</ecNumber>
    </recommendedName>
</protein>
<sequence>MNKQIQTEADELGFFGEYGGQYVPETLMPAIIELKKAYKEAKADPEFQRELEYYLSEYVGRATPLTYAASYTESLGGAKIYLKREDLNHTGAHKINNALGQALLAKRMGKKKLVAETGAGQHGVASATVAALFDMELVVFMGSEDIKRQQLNVFRMELLGAKVVAVEDGQGTLSDAVNKALQYWVSHVDDTHYLLGSALGPDPFPTIVRDFQSVIGKEIKSQILKKEGRLPDAIVACIGGGSNAIGTFYPFIKDDVALYGVEAAGQGDDTDKHALAIGKGSPGVLHGTKMYLIQDEDGQVQLAHSISAGLDYPGIGPEHSYYHDIGRVTFENASDTQAMNALINFTKHEGIIPAIESAHALSYVERLAPTMSKEDIIVVTISGRGDKDMETIRQYMVERGLAND</sequence>
<keyword id="KW-0028">Amino-acid biosynthesis</keyword>
<keyword id="KW-0057">Aromatic amino acid biosynthesis</keyword>
<keyword id="KW-0456">Lyase</keyword>
<keyword id="KW-0663">Pyridoxal phosphate</keyword>
<keyword id="KW-0822">Tryptophan biosynthesis</keyword>
<feature type="chain" id="PRO_0000098997" description="Tryptophan synthase beta chain">
    <location>
        <begin position="1"/>
        <end position="404"/>
    </location>
</feature>
<feature type="modified residue" description="N6-(pyridoxal phosphate)lysine" evidence="1">
    <location>
        <position position="94"/>
    </location>
</feature>
<dbReference type="EC" id="4.2.1.20" evidence="1"/>
<dbReference type="EMBL" id="CP000046">
    <property type="protein sequence ID" value="AAW36656.1"/>
    <property type="molecule type" value="Genomic_DNA"/>
</dbReference>
<dbReference type="RefSeq" id="WP_001041337.1">
    <property type="nucleotide sequence ID" value="NZ_JBGOFO010000003.1"/>
</dbReference>
<dbReference type="SMR" id="Q5HG47"/>
<dbReference type="KEGG" id="sac:SACOL1408"/>
<dbReference type="HOGENOM" id="CLU_016734_3_1_9"/>
<dbReference type="UniPathway" id="UPA00035">
    <property type="reaction ID" value="UER00044"/>
</dbReference>
<dbReference type="Proteomes" id="UP000000530">
    <property type="component" value="Chromosome"/>
</dbReference>
<dbReference type="GO" id="GO:0005737">
    <property type="term" value="C:cytoplasm"/>
    <property type="evidence" value="ECO:0007669"/>
    <property type="project" value="TreeGrafter"/>
</dbReference>
<dbReference type="GO" id="GO:0004834">
    <property type="term" value="F:tryptophan synthase activity"/>
    <property type="evidence" value="ECO:0007669"/>
    <property type="project" value="UniProtKB-UniRule"/>
</dbReference>
<dbReference type="CDD" id="cd06446">
    <property type="entry name" value="Trp-synth_B"/>
    <property type="match status" value="1"/>
</dbReference>
<dbReference type="FunFam" id="3.40.50.1100:FF:000001">
    <property type="entry name" value="Tryptophan synthase beta chain"/>
    <property type="match status" value="1"/>
</dbReference>
<dbReference type="FunFam" id="3.40.50.1100:FF:000004">
    <property type="entry name" value="Tryptophan synthase beta chain"/>
    <property type="match status" value="1"/>
</dbReference>
<dbReference type="Gene3D" id="3.40.50.1100">
    <property type="match status" value="2"/>
</dbReference>
<dbReference type="HAMAP" id="MF_00133">
    <property type="entry name" value="Trp_synth_beta"/>
    <property type="match status" value="1"/>
</dbReference>
<dbReference type="InterPro" id="IPR006653">
    <property type="entry name" value="Trp_synth_b_CS"/>
</dbReference>
<dbReference type="InterPro" id="IPR006654">
    <property type="entry name" value="Trp_synth_beta"/>
</dbReference>
<dbReference type="InterPro" id="IPR023026">
    <property type="entry name" value="Trp_synth_beta/beta-like"/>
</dbReference>
<dbReference type="InterPro" id="IPR001926">
    <property type="entry name" value="TrpB-like_PALP"/>
</dbReference>
<dbReference type="InterPro" id="IPR036052">
    <property type="entry name" value="TrpB-like_PALP_sf"/>
</dbReference>
<dbReference type="NCBIfam" id="TIGR00263">
    <property type="entry name" value="trpB"/>
    <property type="match status" value="1"/>
</dbReference>
<dbReference type="PANTHER" id="PTHR48077:SF3">
    <property type="entry name" value="TRYPTOPHAN SYNTHASE"/>
    <property type="match status" value="1"/>
</dbReference>
<dbReference type="PANTHER" id="PTHR48077">
    <property type="entry name" value="TRYPTOPHAN SYNTHASE-RELATED"/>
    <property type="match status" value="1"/>
</dbReference>
<dbReference type="Pfam" id="PF00291">
    <property type="entry name" value="PALP"/>
    <property type="match status" value="1"/>
</dbReference>
<dbReference type="PIRSF" id="PIRSF001413">
    <property type="entry name" value="Trp_syn_beta"/>
    <property type="match status" value="1"/>
</dbReference>
<dbReference type="SUPFAM" id="SSF53686">
    <property type="entry name" value="Tryptophan synthase beta subunit-like PLP-dependent enzymes"/>
    <property type="match status" value="1"/>
</dbReference>
<dbReference type="PROSITE" id="PS00168">
    <property type="entry name" value="TRP_SYNTHASE_BETA"/>
    <property type="match status" value="1"/>
</dbReference>
<proteinExistence type="inferred from homology"/>
<organism>
    <name type="scientific">Staphylococcus aureus (strain COL)</name>
    <dbReference type="NCBI Taxonomy" id="93062"/>
    <lineage>
        <taxon>Bacteria</taxon>
        <taxon>Bacillati</taxon>
        <taxon>Bacillota</taxon>
        <taxon>Bacilli</taxon>
        <taxon>Bacillales</taxon>
        <taxon>Staphylococcaceae</taxon>
        <taxon>Staphylococcus</taxon>
    </lineage>
</organism>
<gene>
    <name evidence="1" type="primary">trpB</name>
    <name type="ordered locus">SACOL1408</name>
</gene>
<accession>Q5HG47</accession>
<reference key="1">
    <citation type="journal article" date="2005" name="J. Bacteriol.">
        <title>Insights on evolution of virulence and resistance from the complete genome analysis of an early methicillin-resistant Staphylococcus aureus strain and a biofilm-producing methicillin-resistant Staphylococcus epidermidis strain.</title>
        <authorList>
            <person name="Gill S.R."/>
            <person name="Fouts D.E."/>
            <person name="Archer G.L."/>
            <person name="Mongodin E.F."/>
            <person name="DeBoy R.T."/>
            <person name="Ravel J."/>
            <person name="Paulsen I.T."/>
            <person name="Kolonay J.F."/>
            <person name="Brinkac L.M."/>
            <person name="Beanan M.J."/>
            <person name="Dodson R.J."/>
            <person name="Daugherty S.C."/>
            <person name="Madupu R."/>
            <person name="Angiuoli S.V."/>
            <person name="Durkin A.S."/>
            <person name="Haft D.H."/>
            <person name="Vamathevan J.J."/>
            <person name="Khouri H."/>
            <person name="Utterback T.R."/>
            <person name="Lee C."/>
            <person name="Dimitrov G."/>
            <person name="Jiang L."/>
            <person name="Qin H."/>
            <person name="Weidman J."/>
            <person name="Tran K."/>
            <person name="Kang K.H."/>
            <person name="Hance I.R."/>
            <person name="Nelson K.E."/>
            <person name="Fraser C.M."/>
        </authorList>
    </citation>
    <scope>NUCLEOTIDE SEQUENCE [LARGE SCALE GENOMIC DNA]</scope>
    <source>
        <strain>COL</strain>
    </source>
</reference>
<name>TRPB_STAAC</name>
<evidence type="ECO:0000255" key="1">
    <source>
        <dbReference type="HAMAP-Rule" id="MF_00133"/>
    </source>
</evidence>